<evidence type="ECO:0000255" key="1">
    <source>
        <dbReference type="HAMAP-Rule" id="MF_01401"/>
    </source>
</evidence>
<accession>Q9KAN8</accession>
<organism>
    <name type="scientific">Halalkalibacterium halodurans (strain ATCC BAA-125 / DSM 18197 / FERM 7344 / JCM 9153 / C-125)</name>
    <name type="common">Bacillus halodurans</name>
    <dbReference type="NCBI Taxonomy" id="272558"/>
    <lineage>
        <taxon>Bacteria</taxon>
        <taxon>Bacillati</taxon>
        <taxon>Bacillota</taxon>
        <taxon>Bacilli</taxon>
        <taxon>Bacillales</taxon>
        <taxon>Bacillaceae</taxon>
        <taxon>Halalkalibacterium (ex Joshi et al. 2022)</taxon>
    </lineage>
</organism>
<gene>
    <name evidence="1" type="primary">msrA</name>
    <name type="ordered locus">BH2249</name>
</gene>
<protein>
    <recommendedName>
        <fullName evidence="1">Peptide methionine sulfoxide reductase MsrA</fullName>
        <shortName evidence="1">Protein-methionine-S-oxide reductase</shortName>
        <ecNumber evidence="1">1.8.4.11</ecNumber>
    </recommendedName>
    <alternativeName>
        <fullName evidence="1">Peptide-methionine (S)-S-oxide reductase</fullName>
        <shortName evidence="1">Peptide Met(O) reductase</shortName>
    </alternativeName>
</protein>
<sequence>MEKRLERAMFAGGCFWCMVQPFDKQPGIESVVSGYAGGTVENPTYEQVKTGTTGHYEVVHITYVPELFPFEKLLSLYWPQIDPTDPDGQFHDRGPQYRTAIFYENEEQRALAERSREALEKSGKFKKPIVTSILPMATFYPAEEEHQQFYKKNPMAYKEDREKSGRDEFIYKHWGK</sequence>
<reference key="1">
    <citation type="journal article" date="2000" name="Nucleic Acids Res.">
        <title>Complete genome sequence of the alkaliphilic bacterium Bacillus halodurans and genomic sequence comparison with Bacillus subtilis.</title>
        <authorList>
            <person name="Takami H."/>
            <person name="Nakasone K."/>
            <person name="Takaki Y."/>
            <person name="Maeno G."/>
            <person name="Sasaki R."/>
            <person name="Masui N."/>
            <person name="Fuji F."/>
            <person name="Hirama C."/>
            <person name="Nakamura Y."/>
            <person name="Ogasawara N."/>
            <person name="Kuhara S."/>
            <person name="Horikoshi K."/>
        </authorList>
    </citation>
    <scope>NUCLEOTIDE SEQUENCE [LARGE SCALE GENOMIC DNA]</scope>
    <source>
        <strain>ATCC BAA-125 / DSM 18197 / FERM 7344 / JCM 9153 / C-125</strain>
    </source>
</reference>
<keyword id="KW-0560">Oxidoreductase</keyword>
<keyword id="KW-1185">Reference proteome</keyword>
<dbReference type="EC" id="1.8.4.11" evidence="1"/>
<dbReference type="EMBL" id="BA000004">
    <property type="protein sequence ID" value="BAB05968.1"/>
    <property type="molecule type" value="Genomic_DNA"/>
</dbReference>
<dbReference type="PIR" id="A83931">
    <property type="entry name" value="A83931"/>
</dbReference>
<dbReference type="SMR" id="Q9KAN8"/>
<dbReference type="STRING" id="272558.gene:10728147"/>
<dbReference type="KEGG" id="bha:BH2249"/>
<dbReference type="eggNOG" id="COG0225">
    <property type="taxonomic scope" value="Bacteria"/>
</dbReference>
<dbReference type="HOGENOM" id="CLU_031040_10_1_9"/>
<dbReference type="Proteomes" id="UP000001258">
    <property type="component" value="Chromosome"/>
</dbReference>
<dbReference type="GO" id="GO:0033744">
    <property type="term" value="F:L-methionine:thioredoxin-disulfide S-oxidoreductase activity"/>
    <property type="evidence" value="ECO:0007669"/>
    <property type="project" value="RHEA"/>
</dbReference>
<dbReference type="GO" id="GO:0008113">
    <property type="term" value="F:peptide-methionine (S)-S-oxide reductase activity"/>
    <property type="evidence" value="ECO:0007669"/>
    <property type="project" value="UniProtKB-UniRule"/>
</dbReference>
<dbReference type="GO" id="GO:0036211">
    <property type="term" value="P:protein modification process"/>
    <property type="evidence" value="ECO:0007669"/>
    <property type="project" value="UniProtKB-UniRule"/>
</dbReference>
<dbReference type="FunFam" id="3.30.1060.10:FF:000003">
    <property type="entry name" value="Peptide methionine sulfoxide reductase MsrA"/>
    <property type="match status" value="1"/>
</dbReference>
<dbReference type="Gene3D" id="3.30.1060.10">
    <property type="entry name" value="Peptide methionine sulphoxide reductase MsrA"/>
    <property type="match status" value="1"/>
</dbReference>
<dbReference type="HAMAP" id="MF_01401">
    <property type="entry name" value="MsrA"/>
    <property type="match status" value="1"/>
</dbReference>
<dbReference type="InterPro" id="IPR002569">
    <property type="entry name" value="Met_Sox_Rdtase_MsrA_dom"/>
</dbReference>
<dbReference type="InterPro" id="IPR036509">
    <property type="entry name" value="Met_Sox_Rdtase_MsrA_sf"/>
</dbReference>
<dbReference type="NCBIfam" id="TIGR00401">
    <property type="entry name" value="msrA"/>
    <property type="match status" value="1"/>
</dbReference>
<dbReference type="PANTHER" id="PTHR43774">
    <property type="entry name" value="PEPTIDE METHIONINE SULFOXIDE REDUCTASE"/>
    <property type="match status" value="1"/>
</dbReference>
<dbReference type="PANTHER" id="PTHR43774:SF1">
    <property type="entry name" value="PEPTIDE METHIONINE SULFOXIDE REDUCTASE MSRA 2"/>
    <property type="match status" value="1"/>
</dbReference>
<dbReference type="Pfam" id="PF01625">
    <property type="entry name" value="PMSR"/>
    <property type="match status" value="1"/>
</dbReference>
<dbReference type="SUPFAM" id="SSF55068">
    <property type="entry name" value="Peptide methionine sulfoxide reductase"/>
    <property type="match status" value="1"/>
</dbReference>
<feature type="chain" id="PRO_0000138529" description="Peptide methionine sulfoxide reductase MsrA">
    <location>
        <begin position="1"/>
        <end position="176"/>
    </location>
</feature>
<feature type="active site" evidence="1">
    <location>
        <position position="14"/>
    </location>
</feature>
<name>MSRA_HALH5</name>
<proteinExistence type="inferred from homology"/>
<comment type="function">
    <text evidence="1">Has an important function as a repair enzyme for proteins that have been inactivated by oxidation. Catalyzes the reversible oxidation-reduction of methionine sulfoxide in proteins to methionine.</text>
</comment>
<comment type="catalytic activity">
    <reaction evidence="1">
        <text>L-methionyl-[protein] + [thioredoxin]-disulfide + H2O = L-methionyl-(S)-S-oxide-[protein] + [thioredoxin]-dithiol</text>
        <dbReference type="Rhea" id="RHEA:14217"/>
        <dbReference type="Rhea" id="RHEA-COMP:10698"/>
        <dbReference type="Rhea" id="RHEA-COMP:10700"/>
        <dbReference type="Rhea" id="RHEA-COMP:12313"/>
        <dbReference type="Rhea" id="RHEA-COMP:12315"/>
        <dbReference type="ChEBI" id="CHEBI:15377"/>
        <dbReference type="ChEBI" id="CHEBI:16044"/>
        <dbReference type="ChEBI" id="CHEBI:29950"/>
        <dbReference type="ChEBI" id="CHEBI:44120"/>
        <dbReference type="ChEBI" id="CHEBI:50058"/>
        <dbReference type="EC" id="1.8.4.11"/>
    </reaction>
</comment>
<comment type="catalytic activity">
    <reaction evidence="1">
        <text>[thioredoxin]-disulfide + L-methionine + H2O = L-methionine (S)-S-oxide + [thioredoxin]-dithiol</text>
        <dbReference type="Rhea" id="RHEA:19993"/>
        <dbReference type="Rhea" id="RHEA-COMP:10698"/>
        <dbReference type="Rhea" id="RHEA-COMP:10700"/>
        <dbReference type="ChEBI" id="CHEBI:15377"/>
        <dbReference type="ChEBI" id="CHEBI:29950"/>
        <dbReference type="ChEBI" id="CHEBI:50058"/>
        <dbReference type="ChEBI" id="CHEBI:57844"/>
        <dbReference type="ChEBI" id="CHEBI:58772"/>
        <dbReference type="EC" id="1.8.4.11"/>
    </reaction>
</comment>
<comment type="similarity">
    <text evidence="1">Belongs to the MsrA Met sulfoxide reductase family.</text>
</comment>